<organism>
    <name type="scientific">Caenorhabditis elegans</name>
    <dbReference type="NCBI Taxonomy" id="6239"/>
    <lineage>
        <taxon>Eukaryota</taxon>
        <taxon>Metazoa</taxon>
        <taxon>Ecdysozoa</taxon>
        <taxon>Nematoda</taxon>
        <taxon>Chromadorea</taxon>
        <taxon>Rhabditida</taxon>
        <taxon>Rhabditina</taxon>
        <taxon>Rhabditomorpha</taxon>
        <taxon>Rhabditoidea</taxon>
        <taxon>Rhabditidae</taxon>
        <taxon>Peloderinae</taxon>
        <taxon>Caenorhabditis</taxon>
    </lineage>
</organism>
<keyword id="KW-1185">Reference proteome</keyword>
<dbReference type="EMBL" id="Z48544">
    <property type="protein sequence ID" value="CAA88440.1"/>
    <property type="molecule type" value="Genomic_DNA"/>
</dbReference>
<dbReference type="PIR" id="T28123">
    <property type="entry name" value="T28123"/>
</dbReference>
<dbReference type="RefSeq" id="NP_496182.1">
    <property type="nucleotide sequence ID" value="NM_063781.6"/>
</dbReference>
<dbReference type="BioGRID" id="39894">
    <property type="interactions" value="1"/>
</dbReference>
<dbReference type="DIP" id="DIP-25809N"/>
<dbReference type="FunCoup" id="Q09383">
    <property type="interactions" value="1523"/>
</dbReference>
<dbReference type="STRING" id="6239.ZK945.7.1"/>
<dbReference type="PaxDb" id="6239-ZK945.7"/>
<dbReference type="PeptideAtlas" id="Q09383"/>
<dbReference type="EnsemblMetazoa" id="ZK945.7.1">
    <property type="protein sequence ID" value="ZK945.7.1"/>
    <property type="gene ID" value="WBGene00014169"/>
</dbReference>
<dbReference type="GeneID" id="174575"/>
<dbReference type="KEGG" id="cel:CELE_ZK945.7"/>
<dbReference type="UCSC" id="ZK945.7">
    <property type="organism name" value="c. elegans"/>
</dbReference>
<dbReference type="AGR" id="WB:WBGene00014169"/>
<dbReference type="CTD" id="174575"/>
<dbReference type="WormBase" id="ZK945.7">
    <property type="protein sequence ID" value="CE01738"/>
    <property type="gene ID" value="WBGene00014169"/>
</dbReference>
<dbReference type="eggNOG" id="ENOG502TFXT">
    <property type="taxonomic scope" value="Eukaryota"/>
</dbReference>
<dbReference type="HOGENOM" id="CLU_062898_0_0_1"/>
<dbReference type="InParanoid" id="Q09383"/>
<dbReference type="OMA" id="HLDQDGM"/>
<dbReference type="OrthoDB" id="5848603at2759"/>
<dbReference type="PRO" id="PR:Q09383"/>
<dbReference type="Proteomes" id="UP000001940">
    <property type="component" value="Chromosome II"/>
</dbReference>
<dbReference type="Bgee" id="WBGene00014169">
    <property type="expression patterns" value="Expressed in material anatomical entity and 2 other cell types or tissues"/>
</dbReference>
<accession>Q09383</accession>
<proteinExistence type="predicted"/>
<name>YS87_CAEEL</name>
<protein>
    <recommendedName>
        <fullName>Uncharacterized protein ZK945.7</fullName>
    </recommendedName>
</protein>
<gene>
    <name type="ORF">ZK945.7</name>
</gene>
<feature type="chain" id="PRO_0000065553" description="Uncharacterized protein ZK945.7">
    <location>
        <begin position="1"/>
        <end position="249"/>
    </location>
</feature>
<reference key="1">
    <citation type="journal article" date="1998" name="Science">
        <title>Genome sequence of the nematode C. elegans: a platform for investigating biology.</title>
        <authorList>
            <consortium name="The C. elegans sequencing consortium"/>
        </authorList>
    </citation>
    <scope>NUCLEOTIDE SEQUENCE [LARGE SCALE GENOMIC DNA]</scope>
    <source>
        <strain>Bristol N2</strain>
    </source>
</reference>
<sequence length="249" mass="27351">MASSFDNQMDQDGMCSVYSAQPSETNCSINEVLAKEIIAVNETPDDQADSSIYPIPKSETNVSASEGFQPCQDINQFNLSVYSAPKSETPVTMNEKFERCKDLMNVLDYSVYSMPPSEANVTMNVASFSEYTALASETNVTMADVLKNVAQDLASEHTAKSAHPTFDTTAYVERLQAELGIPDSKVIGLECSNFSNAKIIDSIECLHQLDKFQPIPVDFDQNPDFGKTAKSVESYLLRSSNASSIHHEI</sequence>